<protein>
    <recommendedName>
        <fullName>Adenosylcobalamin-dependent ribonucleoside-triphosphate reductase</fullName>
        <shortName>RTPR</shortName>
        <ecNumber>1.17.4.2</ecNumber>
    </recommendedName>
</protein>
<dbReference type="EC" id="1.17.4.2"/>
<dbReference type="EMBL" id="L20047">
    <property type="protein sequence ID" value="AAA03078.1"/>
    <property type="molecule type" value="Unassigned_DNA"/>
</dbReference>
<dbReference type="PDB" id="1L1L">
    <property type="method" value="X-ray"/>
    <property type="resolution" value="1.75 A"/>
    <property type="chains" value="A/B/C/D=1-739"/>
</dbReference>
<dbReference type="PDBsum" id="1L1L"/>
<dbReference type="SMR" id="Q59490"/>
<dbReference type="BRENDA" id="1.17.4.2">
    <property type="organism ID" value="2878"/>
</dbReference>
<dbReference type="SABIO-RK" id="Q59490"/>
<dbReference type="EvolutionaryTrace" id="Q59490"/>
<dbReference type="GO" id="GO:0031419">
    <property type="term" value="F:cobalamin binding"/>
    <property type="evidence" value="ECO:0007669"/>
    <property type="project" value="UniProtKB-KW"/>
</dbReference>
<dbReference type="GO" id="GO:0000166">
    <property type="term" value="F:nucleotide binding"/>
    <property type="evidence" value="ECO:0007669"/>
    <property type="project" value="InterPro"/>
</dbReference>
<dbReference type="GO" id="GO:0004748">
    <property type="term" value="F:ribonucleoside-diphosphate reductase activity, thioredoxin disulfide as acceptor"/>
    <property type="evidence" value="ECO:0007669"/>
    <property type="project" value="InterPro"/>
</dbReference>
<dbReference type="GO" id="GO:0008998">
    <property type="term" value="F:ribonucleoside-triphosphate reductase (thioredoxin) activity"/>
    <property type="evidence" value="ECO:0007669"/>
    <property type="project" value="UniProtKB-EC"/>
</dbReference>
<dbReference type="GO" id="GO:0006260">
    <property type="term" value="P:DNA replication"/>
    <property type="evidence" value="ECO:0007669"/>
    <property type="project" value="UniProtKB-KW"/>
</dbReference>
<dbReference type="CDD" id="cd01676">
    <property type="entry name" value="RNR_II_monomer"/>
    <property type="match status" value="1"/>
</dbReference>
<dbReference type="Gene3D" id="3.20.70.20">
    <property type="match status" value="1"/>
</dbReference>
<dbReference type="Gene3D" id="3.30.1620.10">
    <property type="entry name" value="b-12 dependent (class ii) ribonucleotide reductase, Chain A, Domain 2"/>
    <property type="match status" value="1"/>
</dbReference>
<dbReference type="Gene3D" id="3.90.1390.10">
    <property type="entry name" value="b-12 dependent (class ii) ribonucleotide reductase, chain A, domain 3"/>
    <property type="match status" value="1"/>
</dbReference>
<dbReference type="InterPro" id="IPR050862">
    <property type="entry name" value="RdRp_reductase_class-2"/>
</dbReference>
<dbReference type="InterPro" id="IPR054158">
    <property type="entry name" value="RNR-II_ins_dom"/>
</dbReference>
<dbReference type="InterPro" id="IPR040763">
    <property type="entry name" value="RNR_alpha_hel"/>
</dbReference>
<dbReference type="InterPro" id="IPR013345">
    <property type="entry name" value="RTP_Rdtase_AdoCbl-dep"/>
</dbReference>
<dbReference type="NCBIfam" id="TIGR02505">
    <property type="entry name" value="RTPR"/>
    <property type="match status" value="1"/>
</dbReference>
<dbReference type="PANTHER" id="PTHR43371:SF1">
    <property type="entry name" value="RIBONUCLEOSIDE-DIPHOSPHATE REDUCTASE"/>
    <property type="match status" value="1"/>
</dbReference>
<dbReference type="PANTHER" id="PTHR43371">
    <property type="entry name" value="VITAMIN B12-DEPENDENT RIBONUCLEOTIDE REDUCTASE"/>
    <property type="match status" value="1"/>
</dbReference>
<dbReference type="Pfam" id="PF21995">
    <property type="entry name" value="RNR-II_ins_dom"/>
    <property type="match status" value="1"/>
</dbReference>
<dbReference type="Pfam" id="PF17975">
    <property type="entry name" value="RNR_Alpha"/>
    <property type="match status" value="1"/>
</dbReference>
<dbReference type="SUPFAM" id="SSF51998">
    <property type="entry name" value="PFL-like glycyl radical enzymes"/>
    <property type="match status" value="1"/>
</dbReference>
<comment type="catalytic activity">
    <reaction>
        <text>a 2'-deoxyribonucleoside 5'-triphosphate + [thioredoxin]-disulfide + H2O = a ribonucleoside 5'-triphosphate + [thioredoxin]-dithiol</text>
        <dbReference type="Rhea" id="RHEA:12701"/>
        <dbReference type="Rhea" id="RHEA-COMP:10698"/>
        <dbReference type="Rhea" id="RHEA-COMP:10700"/>
        <dbReference type="ChEBI" id="CHEBI:15377"/>
        <dbReference type="ChEBI" id="CHEBI:29950"/>
        <dbReference type="ChEBI" id="CHEBI:50058"/>
        <dbReference type="ChEBI" id="CHEBI:61557"/>
        <dbReference type="ChEBI" id="CHEBI:61560"/>
        <dbReference type="EC" id="1.17.4.2"/>
    </reaction>
</comment>
<comment type="cofactor">
    <cofactor>
        <name>adenosylcob(III)alamin</name>
        <dbReference type="ChEBI" id="CHEBI:18408"/>
    </cofactor>
</comment>
<comment type="activity regulation">
    <text>Allosterically regulated by ATP and dNTP.</text>
</comment>
<comment type="subunit">
    <text evidence="1">Monomer.</text>
</comment>
<comment type="similarity">
    <text evidence="3">Belongs to the class II ribonucleoside-triphosphate reductase family.</text>
</comment>
<organism>
    <name type="scientific">Lactobacillus leichmannii</name>
    <dbReference type="NCBI Taxonomy" id="28039"/>
    <lineage>
        <taxon>Bacteria</taxon>
        <taxon>Bacillati</taxon>
        <taxon>Bacillota</taxon>
        <taxon>Bacilli</taxon>
        <taxon>Lactobacillales</taxon>
        <taxon>Lactobacillaceae</taxon>
        <taxon>Lactobacillus</taxon>
    </lineage>
</organism>
<evidence type="ECO:0000269" key="1">
    <source>
    </source>
</evidence>
<evidence type="ECO:0000269" key="2">
    <source>
    </source>
</evidence>
<evidence type="ECO:0000305" key="3"/>
<evidence type="ECO:0007829" key="4">
    <source>
        <dbReference type="PDB" id="1L1L"/>
    </source>
</evidence>
<proteinExistence type="evidence at protein level"/>
<gene>
    <name type="primary">rtpR</name>
</gene>
<keyword id="KW-0002">3D-structure</keyword>
<keyword id="KW-0021">Allosteric enzyme</keyword>
<keyword id="KW-0846">Cobalamin</keyword>
<keyword id="KW-0170">Cobalt</keyword>
<keyword id="KW-0903">Direct protein sequencing</keyword>
<keyword id="KW-1015">Disulfide bond</keyword>
<keyword id="KW-0235">DNA replication</keyword>
<keyword id="KW-0560">Oxidoreductase</keyword>
<keyword id="KW-0676">Redox-active center</keyword>
<reference key="1">
    <citation type="journal article" date="1993" name="Proc. Natl. Acad. Sci. U.S.A.">
        <title>Cloning, sequencing, and expression of the adenosylcobalamin-dependent ribonucleotide reductase from Lactobacillus leichmannii.</title>
        <authorList>
            <person name="Booker S."/>
            <person name="Stubbe J."/>
        </authorList>
    </citation>
    <scope>NUCLEOTIDE SEQUENCE [GENOMIC DNA]</scope>
    <scope>PROTEIN SEQUENCE OF 2-22; 112-121; 449-461; 489-513 AND 702-739</scope>
</reference>
<reference key="2">
    <citation type="journal article" date="1987" name="Biochemistry">
        <title>Location of the redox-active thiols of ribonucleotide reductase: sequence similarity between the Escherichia coli and Lactobacillus leichmannii enzymes.</title>
        <authorList>
            <person name="Lin A.-N.I."/>
            <person name="Ashley G.W."/>
            <person name="Stubbe J."/>
        </authorList>
    </citation>
    <scope>PROTEIN SEQUENCE OF 112-121 AND 722-739</scope>
    <source>
        <strain>ATCC 7830</strain>
    </source>
</reference>
<reference key="3">
    <citation type="journal article" date="2002" name="Nat. Struct. Biol.">
        <title>The crystal structure of class II ribonucleotide reductase reveals how an allosterically regulated monomer mimics a dimer.</title>
        <authorList>
            <person name="Sintchak M.D."/>
            <person name="Arjara G."/>
            <person name="Kellogg B.A."/>
            <person name="Stubbe J."/>
            <person name="Drennan C.L."/>
        </authorList>
    </citation>
    <scope>X-RAY CRYSTALLOGRAPHY (1.75 ANGSTROMS)</scope>
    <scope>X-RAY CRYSTALLOGRAPHY (2.0 ANGSTROMS) IN COMPLEX WITH ADENINYLPENTYLCOBALAMIN</scope>
    <scope>SEQUENCE REVISION TO 151</scope>
</reference>
<name>RTPR_LACLE</name>
<accession>Q59490</accession>
<feature type="initiator methionine" description="Removed" evidence="2">
    <location>
        <position position="1"/>
    </location>
</feature>
<feature type="chain" id="PRO_0000221428" description="Adenosylcobalamin-dependent ribonucleoside-triphosphate reductase">
    <location>
        <begin position="2"/>
        <end position="739"/>
    </location>
</feature>
<feature type="region of interest" description="Effector region-1">
    <location>
        <begin position="147"/>
        <end position="158"/>
    </location>
</feature>
<feature type="region of interest" description="Effector region-2">
    <location>
        <begin position="168"/>
        <end position="313"/>
    </location>
</feature>
<feature type="region of interest" description="Adenosylcobalamin-binding-1">
    <location>
        <begin position="565"/>
        <end position="626"/>
    </location>
</feature>
<feature type="region of interest" description="Adenosylcobalamin-binding-2">
    <location>
        <begin position="685"/>
        <end position="724"/>
    </location>
</feature>
<feature type="active site">
    <location>
        <position position="408"/>
    </location>
</feature>
<feature type="active site">
    <location>
        <position position="410"/>
    </location>
</feature>
<feature type="disulfide bond" description="Redox-active">
    <location>
        <begin position="119"/>
        <end position="419"/>
    </location>
</feature>
<feature type="sequence conflict" description="In Ref. 1; AAA03078." evidence="3" ref="1">
    <original>F</original>
    <variation>C</variation>
    <location>
        <position position="152"/>
    </location>
</feature>
<feature type="sequence conflict" description="In Ref. 1; AA sequence." evidence="3" ref="1">
    <original>N</original>
    <variation>D</variation>
    <location>
        <position position="717"/>
    </location>
</feature>
<feature type="helix" evidence="4">
    <location>
        <begin position="9"/>
        <end position="18"/>
    </location>
</feature>
<feature type="helix" evidence="4">
    <location>
        <begin position="27"/>
        <end position="32"/>
    </location>
</feature>
<feature type="turn" evidence="4">
    <location>
        <begin position="33"/>
        <end position="35"/>
    </location>
</feature>
<feature type="turn" evidence="4">
    <location>
        <begin position="40"/>
        <end position="43"/>
    </location>
</feature>
<feature type="helix" evidence="4">
    <location>
        <begin position="48"/>
        <end position="60"/>
    </location>
</feature>
<feature type="helix" evidence="4">
    <location>
        <begin position="64"/>
        <end position="67"/>
    </location>
</feature>
<feature type="helix" evidence="4">
    <location>
        <begin position="72"/>
        <end position="90"/>
    </location>
</feature>
<feature type="strand" evidence="4">
    <location>
        <begin position="93"/>
        <end position="96"/>
    </location>
</feature>
<feature type="helix" evidence="4">
    <location>
        <begin position="98"/>
        <end position="103"/>
    </location>
</feature>
<feature type="helix" evidence="4">
    <location>
        <begin position="107"/>
        <end position="110"/>
    </location>
</feature>
<feature type="turn" evidence="4">
    <location>
        <begin position="113"/>
        <end position="116"/>
    </location>
</feature>
<feature type="strand" evidence="4">
    <location>
        <begin position="119"/>
        <end position="123"/>
    </location>
</feature>
<feature type="helix" evidence="4">
    <location>
        <begin position="148"/>
        <end position="158"/>
    </location>
</feature>
<feature type="strand" evidence="4">
    <location>
        <begin position="162"/>
        <end position="166"/>
    </location>
</feature>
<feature type="helix" evidence="4">
    <location>
        <begin position="169"/>
        <end position="172"/>
    </location>
</feature>
<feature type="strand" evidence="4">
    <location>
        <begin position="183"/>
        <end position="187"/>
    </location>
</feature>
<feature type="helix" evidence="4">
    <location>
        <begin position="195"/>
        <end position="200"/>
    </location>
</feature>
<feature type="turn" evidence="4">
    <location>
        <begin position="206"/>
        <end position="208"/>
    </location>
</feature>
<feature type="strand" evidence="4">
    <location>
        <begin position="216"/>
        <end position="219"/>
    </location>
</feature>
<feature type="helix" evidence="4">
    <location>
        <begin position="224"/>
        <end position="236"/>
    </location>
</feature>
<feature type="helix" evidence="4">
    <location>
        <begin position="240"/>
        <end position="242"/>
    </location>
</feature>
<feature type="strand" evidence="4">
    <location>
        <begin position="249"/>
        <end position="253"/>
    </location>
</feature>
<feature type="strand" evidence="4">
    <location>
        <begin position="267"/>
        <end position="270"/>
    </location>
</feature>
<feature type="helix" evidence="4">
    <location>
        <begin position="275"/>
        <end position="289"/>
    </location>
</feature>
<feature type="turn" evidence="4">
    <location>
        <begin position="290"/>
        <end position="293"/>
    </location>
</feature>
<feature type="helix" evidence="4">
    <location>
        <begin position="298"/>
        <end position="313"/>
    </location>
</feature>
<feature type="strand" evidence="4">
    <location>
        <begin position="322"/>
        <end position="327"/>
    </location>
</feature>
<feature type="helix" evidence="4">
    <location>
        <begin position="331"/>
        <end position="335"/>
    </location>
</feature>
<feature type="helix" evidence="4">
    <location>
        <begin position="336"/>
        <end position="338"/>
    </location>
</feature>
<feature type="helix" evidence="4">
    <location>
        <begin position="340"/>
        <end position="345"/>
    </location>
</feature>
<feature type="helix" evidence="4">
    <location>
        <begin position="347"/>
        <end position="349"/>
    </location>
</feature>
<feature type="strand" evidence="4">
    <location>
        <begin position="350"/>
        <end position="356"/>
    </location>
</feature>
<feature type="helix" evidence="4">
    <location>
        <begin position="363"/>
        <end position="373"/>
    </location>
</feature>
<feature type="strand" evidence="4">
    <location>
        <begin position="377"/>
        <end position="380"/>
    </location>
</feature>
<feature type="helix" evidence="4">
    <location>
        <begin position="381"/>
        <end position="386"/>
    </location>
</feature>
<feature type="helix" evidence="4">
    <location>
        <begin position="390"/>
        <end position="392"/>
    </location>
</feature>
<feature type="turn" evidence="4">
    <location>
        <begin position="396"/>
        <end position="401"/>
    </location>
</feature>
<feature type="strand" evidence="4">
    <location>
        <begin position="402"/>
        <end position="405"/>
    </location>
</feature>
<feature type="strand" evidence="4">
    <location>
        <begin position="411"/>
        <end position="414"/>
    </location>
</feature>
<feature type="strand" evidence="4">
    <location>
        <begin position="421"/>
        <end position="424"/>
    </location>
</feature>
<feature type="helix" evidence="4">
    <location>
        <begin position="426"/>
        <end position="431"/>
    </location>
</feature>
<feature type="helix" evidence="4">
    <location>
        <begin position="436"/>
        <end position="450"/>
    </location>
</feature>
<feature type="helix" evidence="4">
    <location>
        <begin position="458"/>
        <end position="467"/>
    </location>
</feature>
<feature type="strand" evidence="4">
    <location>
        <begin position="471"/>
        <end position="474"/>
    </location>
</feature>
<feature type="helix" evidence="4">
    <location>
        <begin position="477"/>
        <end position="485"/>
    </location>
</feature>
<feature type="strand" evidence="4">
    <location>
        <begin position="489"/>
        <end position="497"/>
    </location>
</feature>
<feature type="turn" evidence="4">
    <location>
        <begin position="499"/>
        <end position="501"/>
    </location>
</feature>
<feature type="strand" evidence="4">
    <location>
        <begin position="504"/>
        <end position="510"/>
    </location>
</feature>
<feature type="helix" evidence="4">
    <location>
        <begin position="512"/>
        <end position="536"/>
    </location>
</feature>
<feature type="strand" evidence="4">
    <location>
        <begin position="545"/>
        <end position="547"/>
    </location>
</feature>
<feature type="helix" evidence="4">
    <location>
        <begin position="551"/>
        <end position="557"/>
    </location>
</feature>
<feature type="strand" evidence="4">
    <location>
        <begin position="569"/>
        <end position="578"/>
    </location>
</feature>
<feature type="helix" evidence="4">
    <location>
        <begin position="583"/>
        <end position="589"/>
    </location>
</feature>
<feature type="strand" evidence="4">
    <location>
        <begin position="593"/>
        <end position="596"/>
    </location>
</feature>
<feature type="strand" evidence="4">
    <location>
        <begin position="598"/>
        <end position="600"/>
    </location>
</feature>
<feature type="strand" evidence="4">
    <location>
        <begin position="603"/>
        <end position="611"/>
    </location>
</feature>
<feature type="turn" evidence="4">
    <location>
        <begin position="613"/>
        <end position="616"/>
    </location>
</feature>
<feature type="turn" evidence="4">
    <location>
        <begin position="623"/>
        <end position="625"/>
    </location>
</feature>
<feature type="helix" evidence="4">
    <location>
        <begin position="628"/>
        <end position="641"/>
    </location>
</feature>
<feature type="strand" evidence="4">
    <location>
        <begin position="650"/>
        <end position="653"/>
    </location>
</feature>
<feature type="helix" evidence="4">
    <location>
        <begin position="655"/>
        <end position="660"/>
    </location>
</feature>
<feature type="helix" evidence="4">
    <location>
        <begin position="661"/>
        <end position="667"/>
    </location>
</feature>
<feature type="turn" evidence="4">
    <location>
        <begin position="668"/>
        <end position="671"/>
    </location>
</feature>
<feature type="strand" evidence="4">
    <location>
        <begin position="673"/>
        <end position="679"/>
    </location>
</feature>
<feature type="strand" evidence="4">
    <location>
        <begin position="689"/>
        <end position="692"/>
    </location>
</feature>
<feature type="helix" evidence="4">
    <location>
        <begin position="695"/>
        <end position="704"/>
    </location>
</feature>
<feature type="helix" evidence="4">
    <location>
        <begin position="709"/>
        <end position="719"/>
    </location>
</feature>
<sequence length="739" mass="81983">MSEEISLSAEFIDRVKASVKPHWGKLGWVTYKRTYARWLPEKGRSENWDETVKRVVEGNINLDPRLQDSPSLELKQSLTEEAERLYKLIYGLGATPSGRNLWISGTDYQRRTGDSLNNCWFVAIRPQKYGDSKIVPSYLGKQEKAVSMPFSFLFDELMKGGGVGFSVARSNISQIPRVDFAIDLQLVVDETSESYDASVKVGAVGKNELVQDADSIYYRLPDTREGWVLANALLIDLHFAQTNPDRKQKLILDLSDIRPYGAEIHGFGGTASGPMPLISMLLDVNEVLNNKAGGRLTAVDAADICNLIGKAVVAGNVRRSAELALGSNDDQDFISMKQDQEKLMHHRWASNNSVAVDSAFSGYQPIAAGIRENGEPGIVNLDLSKNYGRIVDGYQAGIDGDVEGTNPCGEISLANGEPCNLFEVFPLIAEEQGWDLQEVFALAARYAKRVTFSPYDWEISREIIQKNRRIGISMSGIQDWLLTRLGNRVVTGFKDDFDPETHEAIKVPVYDKRAIKMVDQLYKAVVKADQDYSKTLGCNESIKHTTVKPSGTVAKLAGASEGMHFHYGAYLIQRIRFQDSDPLLPALKACGYRTEADIYTENTTCVEFPIKAVGADNPNFASAGTVSIAEQFATQAFLQTYWSDNAVSCTITFQDSEGDQVESLLRQYRFITKSTSLLPYFGGSLQQAPKEPIDKETYEKRSQEITGNVEEVFSQLNSDVKDLELVDQTDCEGGACPIK</sequence>